<keyword id="KW-0052">Apoplast</keyword>
<keyword id="KW-0379">Hydroxylation</keyword>
<keyword id="KW-0611">Plant defense</keyword>
<keyword id="KW-1185">Reference proteome</keyword>
<keyword id="KW-0964">Secreted</keyword>
<keyword id="KW-0732">Signal</keyword>
<feature type="signal peptide" evidence="1">
    <location>
        <begin position="1"/>
        <end position="30"/>
    </location>
</feature>
<feature type="chain" id="PRO_5011945934" description="PAMP-induced secreted peptide 1" evidence="1">
    <location>
        <begin position="31"/>
        <end position="72"/>
    </location>
</feature>
<feature type="modified residue" description="4-hydroxyproline" evidence="5">
    <location>
        <position position="65"/>
    </location>
</feature>
<feature type="modified residue" description="4-hydroxyproline" evidence="5">
    <location>
        <position position="67"/>
    </location>
</feature>
<accession>Q1PE40</accession>
<accession>A0MFA5</accession>
<accession>O49455</accession>
<proteinExistence type="evidence at protein level"/>
<dbReference type="EMBL" id="AL021749">
    <property type="protein sequence ID" value="CAA16885.1"/>
    <property type="status" value="ALT_INIT"/>
    <property type="molecule type" value="Genomic_DNA"/>
</dbReference>
<dbReference type="EMBL" id="AL161572">
    <property type="protein sequence ID" value="CAB79648.1"/>
    <property type="status" value="ALT_INIT"/>
    <property type="molecule type" value="Genomic_DNA"/>
</dbReference>
<dbReference type="EMBL" id="CP002687">
    <property type="protein sequence ID" value="AEE85489.1"/>
    <property type="molecule type" value="Genomic_DNA"/>
</dbReference>
<dbReference type="EMBL" id="DQ446878">
    <property type="protein sequence ID" value="ABE65536.1"/>
    <property type="molecule type" value="Genomic_DNA"/>
</dbReference>
<dbReference type="EMBL" id="DQ653231">
    <property type="protein sequence ID" value="ABK28261.1"/>
    <property type="status" value="ALT_SEQ"/>
    <property type="molecule type" value="Genomic_DNA"/>
</dbReference>
<dbReference type="PIR" id="T04616">
    <property type="entry name" value="T04616"/>
</dbReference>
<dbReference type="RefSeq" id="NP_194575.2">
    <property type="nucleotide sequence ID" value="NM_118988.3"/>
</dbReference>
<dbReference type="STRING" id="3702.Q1PE40"/>
<dbReference type="PaxDb" id="3702-AT4G28460.1"/>
<dbReference type="EnsemblPlants" id="AT4G28460.1">
    <property type="protein sequence ID" value="AT4G28460.1"/>
    <property type="gene ID" value="AT4G28460"/>
</dbReference>
<dbReference type="GeneID" id="828963"/>
<dbReference type="Gramene" id="AT4G28460.1">
    <property type="protein sequence ID" value="AT4G28460.1"/>
    <property type="gene ID" value="AT4G28460"/>
</dbReference>
<dbReference type="KEGG" id="ath:AT4G28460"/>
<dbReference type="Araport" id="AT4G28460"/>
<dbReference type="TAIR" id="AT4G28460">
    <property type="gene designation" value="PREPIP1"/>
</dbReference>
<dbReference type="HOGENOM" id="CLU_2708279_0_0_1"/>
<dbReference type="InParanoid" id="Q1PE40"/>
<dbReference type="OrthoDB" id="1872350at2759"/>
<dbReference type="PhylomeDB" id="Q1PE40"/>
<dbReference type="PRO" id="PR:Q1PE40"/>
<dbReference type="Proteomes" id="UP000006548">
    <property type="component" value="Chromosome 4"/>
</dbReference>
<dbReference type="ExpressionAtlas" id="Q1PE40">
    <property type="expression patterns" value="baseline and differential"/>
</dbReference>
<dbReference type="GO" id="GO:0048046">
    <property type="term" value="C:apoplast"/>
    <property type="evidence" value="ECO:0000314"/>
    <property type="project" value="UniProtKB"/>
</dbReference>
<dbReference type="GO" id="GO:0042742">
    <property type="term" value="P:defense response to bacterium"/>
    <property type="evidence" value="ECO:0000314"/>
    <property type="project" value="TAIR"/>
</dbReference>
<dbReference type="GO" id="GO:0006955">
    <property type="term" value="P:immune response"/>
    <property type="evidence" value="ECO:0000270"/>
    <property type="project" value="TAIR"/>
</dbReference>
<dbReference type="GO" id="GO:0045087">
    <property type="term" value="P:innate immune response"/>
    <property type="evidence" value="ECO:0000315"/>
    <property type="project" value="UniProtKB"/>
</dbReference>
<dbReference type="GO" id="GO:2000280">
    <property type="term" value="P:regulation of root development"/>
    <property type="evidence" value="ECO:0000315"/>
    <property type="project" value="UniProtKB"/>
</dbReference>
<dbReference type="InterPro" id="IPR040273">
    <property type="entry name" value="PIP1"/>
</dbReference>
<dbReference type="PANTHER" id="PTHR37245">
    <property type="entry name" value="PAMP-INDUCED SECRETED PEPTIDE 1"/>
    <property type="match status" value="1"/>
</dbReference>
<dbReference type="PANTHER" id="PTHR37245:SF4">
    <property type="entry name" value="PAMP-INDUCED SECRETED PEPTIDE 1"/>
    <property type="match status" value="1"/>
</dbReference>
<name>PIP1_ARATH</name>
<sequence length="72" mass="7831">MRRVSWSTVLIVVVMVSLFFVEHVVVPAAAGRVLTEKSGDGSATMTVEKMKSTVDSWFQRLASGPSPRGRGH</sequence>
<organism>
    <name type="scientific">Arabidopsis thaliana</name>
    <name type="common">Mouse-ear cress</name>
    <dbReference type="NCBI Taxonomy" id="3702"/>
    <lineage>
        <taxon>Eukaryota</taxon>
        <taxon>Viridiplantae</taxon>
        <taxon>Streptophyta</taxon>
        <taxon>Embryophyta</taxon>
        <taxon>Tracheophyta</taxon>
        <taxon>Spermatophyta</taxon>
        <taxon>Magnoliopsida</taxon>
        <taxon>eudicotyledons</taxon>
        <taxon>Gunneridae</taxon>
        <taxon>Pentapetalae</taxon>
        <taxon>rosids</taxon>
        <taxon>malvids</taxon>
        <taxon>Brassicales</taxon>
        <taxon>Brassicaceae</taxon>
        <taxon>Camelineae</taxon>
        <taxon>Arabidopsis</taxon>
    </lineage>
</organism>
<protein>
    <recommendedName>
        <fullName evidence="3">PAMP-induced secreted peptide 1</fullName>
    </recommendedName>
</protein>
<evidence type="ECO:0000255" key="1"/>
<evidence type="ECO:0000269" key="2">
    <source>
    </source>
</evidence>
<evidence type="ECO:0000303" key="3">
    <source>
    </source>
</evidence>
<evidence type="ECO:0000305" key="4"/>
<evidence type="ECO:0000305" key="5">
    <source>
    </source>
</evidence>
<evidence type="ECO:0000312" key="6">
    <source>
        <dbReference type="Araport" id="AT4G28460"/>
    </source>
</evidence>
<evidence type="ECO:0000312" key="7">
    <source>
        <dbReference type="EMBL" id="CAA16885.1"/>
    </source>
</evidence>
<comment type="function">
    <text evidence="2">Endogenous secreted peptide that acts as elicitor of immune response and positive regulator of defense response. Amplifies the immune response triggered by flg22, the active epitope of bacterial flagellin. Acts as a negative regulator of root growth.</text>
</comment>
<comment type="subcellular location">
    <subcellularLocation>
        <location evidence="2">Secreted</location>
        <location evidence="2">Extracellular space</location>
        <location evidence="2">Apoplast</location>
    </subcellularLocation>
</comment>
<comment type="tissue specificity">
    <text evidence="2">Expressed in guard cells, hydathodes, leaf trichomes, and vascular tissues of leaves and roots.</text>
</comment>
<comment type="induction">
    <text>Induced by infection with the bacterial pathogen Pseudomonas syringae pv tomato strain DC3000 and the fungal pathogen Fusarium oxysporum conglutinans strain 699. Induced by the flagellin flg22, chitin elicitor and salicylate.</text>
</comment>
<comment type="PTM">
    <text evidence="5">Contains 4-hydroxyproline; hydroxylated on Pro-65 and Pro-67.</text>
</comment>
<comment type="sequence caution" evidence="4">
    <conflict type="erroneous termination">
        <sequence resource="EMBL-CDS" id="ABK28261"/>
    </conflict>
    <text>Extended C-terminus.</text>
</comment>
<comment type="sequence caution" evidence="4">
    <conflict type="erroneous initiation">
        <sequence resource="EMBL-CDS" id="CAA16885"/>
    </conflict>
    <text>Truncated N-terminus.</text>
</comment>
<comment type="sequence caution" evidence="4">
    <conflict type="erroneous initiation">
        <sequence resource="EMBL-CDS" id="CAB79648"/>
    </conflict>
    <text>Truncated N-terminus.</text>
</comment>
<gene>
    <name evidence="3" type="primary">PIP1</name>
    <name evidence="6" type="ordered locus">At4g28460</name>
    <name evidence="7" type="ORF">F20O9.140</name>
</gene>
<reference key="1">
    <citation type="journal article" date="1999" name="Nature">
        <title>Sequence and analysis of chromosome 4 of the plant Arabidopsis thaliana.</title>
        <authorList>
            <person name="Mayer K.F.X."/>
            <person name="Schueller C."/>
            <person name="Wambutt R."/>
            <person name="Murphy G."/>
            <person name="Volckaert G."/>
            <person name="Pohl T."/>
            <person name="Duesterhoeft A."/>
            <person name="Stiekema W."/>
            <person name="Entian K.-D."/>
            <person name="Terryn N."/>
            <person name="Harris B."/>
            <person name="Ansorge W."/>
            <person name="Brandt P."/>
            <person name="Grivell L.A."/>
            <person name="Rieger M."/>
            <person name="Weichselgartner M."/>
            <person name="de Simone V."/>
            <person name="Obermaier B."/>
            <person name="Mache R."/>
            <person name="Mueller M."/>
            <person name="Kreis M."/>
            <person name="Delseny M."/>
            <person name="Puigdomenech P."/>
            <person name="Watson M."/>
            <person name="Schmidtheini T."/>
            <person name="Reichert B."/>
            <person name="Portetelle D."/>
            <person name="Perez-Alonso M."/>
            <person name="Boutry M."/>
            <person name="Bancroft I."/>
            <person name="Vos P."/>
            <person name="Hoheisel J."/>
            <person name="Zimmermann W."/>
            <person name="Wedler H."/>
            <person name="Ridley P."/>
            <person name="Langham S.-A."/>
            <person name="McCullagh B."/>
            <person name="Bilham L."/>
            <person name="Robben J."/>
            <person name="van der Schueren J."/>
            <person name="Grymonprez B."/>
            <person name="Chuang Y.-J."/>
            <person name="Vandenbussche F."/>
            <person name="Braeken M."/>
            <person name="Weltjens I."/>
            <person name="Voet M."/>
            <person name="Bastiaens I."/>
            <person name="Aert R."/>
            <person name="Defoor E."/>
            <person name="Weitzenegger T."/>
            <person name="Bothe G."/>
            <person name="Ramsperger U."/>
            <person name="Hilbert H."/>
            <person name="Braun M."/>
            <person name="Holzer E."/>
            <person name="Brandt A."/>
            <person name="Peters S."/>
            <person name="van Staveren M."/>
            <person name="Dirkse W."/>
            <person name="Mooijman P."/>
            <person name="Klein Lankhorst R."/>
            <person name="Rose M."/>
            <person name="Hauf J."/>
            <person name="Koetter P."/>
            <person name="Berneiser S."/>
            <person name="Hempel S."/>
            <person name="Feldpausch M."/>
            <person name="Lamberth S."/>
            <person name="Van den Daele H."/>
            <person name="De Keyser A."/>
            <person name="Buysshaert C."/>
            <person name="Gielen J."/>
            <person name="Villarroel R."/>
            <person name="De Clercq R."/>
            <person name="van Montagu M."/>
            <person name="Rogers J."/>
            <person name="Cronin A."/>
            <person name="Quail M.A."/>
            <person name="Bray-Allen S."/>
            <person name="Clark L."/>
            <person name="Doggett J."/>
            <person name="Hall S."/>
            <person name="Kay M."/>
            <person name="Lennard N."/>
            <person name="McLay K."/>
            <person name="Mayes R."/>
            <person name="Pettett A."/>
            <person name="Rajandream M.A."/>
            <person name="Lyne M."/>
            <person name="Benes V."/>
            <person name="Rechmann S."/>
            <person name="Borkova D."/>
            <person name="Bloecker H."/>
            <person name="Scharfe M."/>
            <person name="Grimm M."/>
            <person name="Loehnert T.-H."/>
            <person name="Dose S."/>
            <person name="de Haan M."/>
            <person name="Maarse A.C."/>
            <person name="Schaefer M."/>
            <person name="Mueller-Auer S."/>
            <person name="Gabel C."/>
            <person name="Fuchs M."/>
            <person name="Fartmann B."/>
            <person name="Granderath K."/>
            <person name="Dauner D."/>
            <person name="Herzl A."/>
            <person name="Neumann S."/>
            <person name="Argiriou A."/>
            <person name="Vitale D."/>
            <person name="Liguori R."/>
            <person name="Piravandi E."/>
            <person name="Massenet O."/>
            <person name="Quigley F."/>
            <person name="Clabauld G."/>
            <person name="Muendlein A."/>
            <person name="Felber R."/>
            <person name="Schnabl S."/>
            <person name="Hiller R."/>
            <person name="Schmidt W."/>
            <person name="Lecharny A."/>
            <person name="Aubourg S."/>
            <person name="Chefdor F."/>
            <person name="Cooke R."/>
            <person name="Berger C."/>
            <person name="Monfort A."/>
            <person name="Casacuberta E."/>
            <person name="Gibbons T."/>
            <person name="Weber N."/>
            <person name="Vandenbol M."/>
            <person name="Bargues M."/>
            <person name="Terol J."/>
            <person name="Torres A."/>
            <person name="Perez-Perez A."/>
            <person name="Purnelle B."/>
            <person name="Bent E."/>
            <person name="Johnson S."/>
            <person name="Tacon D."/>
            <person name="Jesse T."/>
            <person name="Heijnen L."/>
            <person name="Schwarz S."/>
            <person name="Scholler P."/>
            <person name="Heber S."/>
            <person name="Francs P."/>
            <person name="Bielke C."/>
            <person name="Frishman D."/>
            <person name="Haase D."/>
            <person name="Lemcke K."/>
            <person name="Mewes H.-W."/>
            <person name="Stocker S."/>
            <person name="Zaccaria P."/>
            <person name="Bevan M."/>
            <person name="Wilson R.K."/>
            <person name="de la Bastide M."/>
            <person name="Habermann K."/>
            <person name="Parnell L."/>
            <person name="Dedhia N."/>
            <person name="Gnoj L."/>
            <person name="Schutz K."/>
            <person name="Huang E."/>
            <person name="Spiegel L."/>
            <person name="Sekhon M."/>
            <person name="Murray J."/>
            <person name="Sheet P."/>
            <person name="Cordes M."/>
            <person name="Abu-Threideh J."/>
            <person name="Stoneking T."/>
            <person name="Kalicki J."/>
            <person name="Graves T."/>
            <person name="Harmon G."/>
            <person name="Edwards J."/>
            <person name="Latreille P."/>
            <person name="Courtney L."/>
            <person name="Cloud J."/>
            <person name="Abbott A."/>
            <person name="Scott K."/>
            <person name="Johnson D."/>
            <person name="Minx P."/>
            <person name="Bentley D."/>
            <person name="Fulton B."/>
            <person name="Miller N."/>
            <person name="Greco T."/>
            <person name="Kemp K."/>
            <person name="Kramer J."/>
            <person name="Fulton L."/>
            <person name="Mardis E."/>
            <person name="Dante M."/>
            <person name="Pepin K."/>
            <person name="Hillier L.W."/>
            <person name="Nelson J."/>
            <person name="Spieth J."/>
            <person name="Ryan E."/>
            <person name="Andrews S."/>
            <person name="Geisel C."/>
            <person name="Layman D."/>
            <person name="Du H."/>
            <person name="Ali J."/>
            <person name="Berghoff A."/>
            <person name="Jones K."/>
            <person name="Drone K."/>
            <person name="Cotton M."/>
            <person name="Joshu C."/>
            <person name="Antonoiu B."/>
            <person name="Zidanic M."/>
            <person name="Strong C."/>
            <person name="Sun H."/>
            <person name="Lamar B."/>
            <person name="Yordan C."/>
            <person name="Ma P."/>
            <person name="Zhong J."/>
            <person name="Preston R."/>
            <person name="Vil D."/>
            <person name="Shekher M."/>
            <person name="Matero A."/>
            <person name="Shah R."/>
            <person name="Swaby I.K."/>
            <person name="O'Shaughnessy A."/>
            <person name="Rodriguez M."/>
            <person name="Hoffman J."/>
            <person name="Till S."/>
            <person name="Granat S."/>
            <person name="Shohdy N."/>
            <person name="Hasegawa A."/>
            <person name="Hameed A."/>
            <person name="Lodhi M."/>
            <person name="Johnson A."/>
            <person name="Chen E."/>
            <person name="Marra M.A."/>
            <person name="Martienssen R."/>
            <person name="McCombie W.R."/>
        </authorList>
    </citation>
    <scope>NUCLEOTIDE SEQUENCE [LARGE SCALE GENOMIC DNA]</scope>
    <source>
        <strain>cv. Columbia</strain>
    </source>
</reference>
<reference key="2">
    <citation type="journal article" date="2017" name="Plant J.">
        <title>Araport11: a complete reannotation of the Arabidopsis thaliana reference genome.</title>
        <authorList>
            <person name="Cheng C.Y."/>
            <person name="Krishnakumar V."/>
            <person name="Chan A.P."/>
            <person name="Thibaud-Nissen F."/>
            <person name="Schobel S."/>
            <person name="Town C.D."/>
        </authorList>
    </citation>
    <scope>GENOME REANNOTATION</scope>
    <source>
        <strain>cv. Columbia</strain>
    </source>
</reference>
<reference key="3">
    <citation type="journal article" date="2006" name="Plant Biotechnol. J.">
        <title>Simultaneous high-throughput recombinational cloning of open reading frames in closed and open configurations.</title>
        <authorList>
            <person name="Underwood B.A."/>
            <person name="Vanderhaeghen R."/>
            <person name="Whitford R."/>
            <person name="Town C.D."/>
            <person name="Hilson P."/>
        </authorList>
    </citation>
    <scope>NUCLEOTIDE SEQUENCE [LARGE SCALE GENOMIC DNA]</scope>
    <source>
        <strain>cv. Columbia</strain>
    </source>
</reference>
<reference key="4">
    <citation type="journal article" date="2014" name="PLoS Pathog.">
        <title>The secreted peptide PIP1 amplifies immunity through receptor-like kinase 7.</title>
        <authorList>
            <person name="Hou S."/>
            <person name="Wang X."/>
            <person name="Chen D."/>
            <person name="Yang X."/>
            <person name="Wang M."/>
            <person name="Turra D."/>
            <person name="Di Pietro A."/>
            <person name="Zhang W."/>
        </authorList>
    </citation>
    <scope>FUNCTION</scope>
    <scope>INTERACTION WITH RLK7</scope>
    <scope>SUBCELLULAR LOCATION</scope>
    <scope>TISSUE SPECIFICITY</scope>
    <scope>INDUCTION</scope>
    <scope>HYDROXYLATION AT PRO-65 AND PRO-67</scope>
</reference>